<gene>
    <name evidence="1" type="primary">plsY</name>
    <name type="ordered locus">plu3975</name>
</gene>
<feature type="chain" id="PRO_0000188422" description="Glycerol-3-phosphate acyltransferase">
    <location>
        <begin position="1"/>
        <end position="218"/>
    </location>
</feature>
<feature type="transmembrane region" description="Helical" evidence="1">
    <location>
        <begin position="4"/>
        <end position="24"/>
    </location>
</feature>
<feature type="transmembrane region" description="Helical" evidence="1">
    <location>
        <begin position="54"/>
        <end position="74"/>
    </location>
</feature>
<feature type="transmembrane region" description="Helical" evidence="1">
    <location>
        <begin position="80"/>
        <end position="100"/>
    </location>
</feature>
<feature type="transmembrane region" description="Helical" evidence="1">
    <location>
        <begin position="107"/>
        <end position="127"/>
    </location>
</feature>
<feature type="transmembrane region" description="Helical" evidence="1">
    <location>
        <begin position="130"/>
        <end position="150"/>
    </location>
</feature>
<comment type="function">
    <text evidence="1">Catalyzes the transfer of an acyl group from acyl-phosphate (acyl-PO(4)) to glycerol-3-phosphate (G3P) to form lysophosphatidic acid (LPA). This enzyme utilizes acyl-phosphate as fatty acyl donor, but not acyl-CoA or acyl-ACP.</text>
</comment>
<comment type="catalytic activity">
    <reaction evidence="1">
        <text>an acyl phosphate + sn-glycerol 3-phosphate = a 1-acyl-sn-glycero-3-phosphate + phosphate</text>
        <dbReference type="Rhea" id="RHEA:34075"/>
        <dbReference type="ChEBI" id="CHEBI:43474"/>
        <dbReference type="ChEBI" id="CHEBI:57597"/>
        <dbReference type="ChEBI" id="CHEBI:57970"/>
        <dbReference type="ChEBI" id="CHEBI:59918"/>
        <dbReference type="EC" id="2.3.1.275"/>
    </reaction>
</comment>
<comment type="pathway">
    <text evidence="1">Lipid metabolism; phospholipid metabolism.</text>
</comment>
<comment type="subunit">
    <text evidence="1">Probably interacts with PlsX.</text>
</comment>
<comment type="subcellular location">
    <subcellularLocation>
        <location evidence="1">Cell inner membrane</location>
        <topology evidence="1">Multi-pass membrane protein</topology>
    </subcellularLocation>
</comment>
<comment type="similarity">
    <text evidence="1">Belongs to the PlsY family.</text>
</comment>
<accession>Q7N0B7</accession>
<dbReference type="EC" id="2.3.1.275" evidence="1"/>
<dbReference type="EMBL" id="BX571872">
    <property type="protein sequence ID" value="CAE16347.1"/>
    <property type="molecule type" value="Genomic_DNA"/>
</dbReference>
<dbReference type="RefSeq" id="WP_011148108.1">
    <property type="nucleotide sequence ID" value="NC_005126.1"/>
</dbReference>
<dbReference type="SMR" id="Q7N0B7"/>
<dbReference type="STRING" id="243265.plu3975"/>
<dbReference type="GeneID" id="48850201"/>
<dbReference type="KEGG" id="plu:plu3975"/>
<dbReference type="eggNOG" id="COG0344">
    <property type="taxonomic scope" value="Bacteria"/>
</dbReference>
<dbReference type="HOGENOM" id="CLU_081254_0_2_6"/>
<dbReference type="OrthoDB" id="9777124at2"/>
<dbReference type="UniPathway" id="UPA00085"/>
<dbReference type="Proteomes" id="UP000002514">
    <property type="component" value="Chromosome"/>
</dbReference>
<dbReference type="GO" id="GO:0005886">
    <property type="term" value="C:plasma membrane"/>
    <property type="evidence" value="ECO:0007669"/>
    <property type="project" value="UniProtKB-SubCell"/>
</dbReference>
<dbReference type="GO" id="GO:0043772">
    <property type="term" value="F:acyl-phosphate glycerol-3-phosphate acyltransferase activity"/>
    <property type="evidence" value="ECO:0007669"/>
    <property type="project" value="UniProtKB-UniRule"/>
</dbReference>
<dbReference type="GO" id="GO:0008654">
    <property type="term" value="P:phospholipid biosynthetic process"/>
    <property type="evidence" value="ECO:0007669"/>
    <property type="project" value="UniProtKB-UniRule"/>
</dbReference>
<dbReference type="HAMAP" id="MF_01043">
    <property type="entry name" value="PlsY"/>
    <property type="match status" value="1"/>
</dbReference>
<dbReference type="InterPro" id="IPR003811">
    <property type="entry name" value="G3P_acylTferase_PlsY"/>
</dbReference>
<dbReference type="NCBIfam" id="TIGR00023">
    <property type="entry name" value="glycerol-3-phosphate 1-O-acyltransferase PlsY"/>
    <property type="match status" value="1"/>
</dbReference>
<dbReference type="PANTHER" id="PTHR30309:SF0">
    <property type="entry name" value="GLYCEROL-3-PHOSPHATE ACYLTRANSFERASE-RELATED"/>
    <property type="match status" value="1"/>
</dbReference>
<dbReference type="PANTHER" id="PTHR30309">
    <property type="entry name" value="INNER MEMBRANE PROTEIN YGIH"/>
    <property type="match status" value="1"/>
</dbReference>
<dbReference type="Pfam" id="PF02660">
    <property type="entry name" value="G3P_acyltransf"/>
    <property type="match status" value="1"/>
</dbReference>
<dbReference type="SMART" id="SM01207">
    <property type="entry name" value="G3P_acyltransf"/>
    <property type="match status" value="1"/>
</dbReference>
<proteinExistence type="inferred from homology"/>
<reference key="1">
    <citation type="journal article" date="2003" name="Nat. Biotechnol.">
        <title>The genome sequence of the entomopathogenic bacterium Photorhabdus luminescens.</title>
        <authorList>
            <person name="Duchaud E."/>
            <person name="Rusniok C."/>
            <person name="Frangeul L."/>
            <person name="Buchrieser C."/>
            <person name="Givaudan A."/>
            <person name="Taourit S."/>
            <person name="Bocs S."/>
            <person name="Boursaux-Eude C."/>
            <person name="Chandler M."/>
            <person name="Charles J.-F."/>
            <person name="Dassa E."/>
            <person name="Derose R."/>
            <person name="Derzelle S."/>
            <person name="Freyssinet G."/>
            <person name="Gaudriault S."/>
            <person name="Medigue C."/>
            <person name="Lanois A."/>
            <person name="Powell K."/>
            <person name="Siguier P."/>
            <person name="Vincent R."/>
            <person name="Wingate V."/>
            <person name="Zouine M."/>
            <person name="Glaser P."/>
            <person name="Boemare N."/>
            <person name="Danchin A."/>
            <person name="Kunst F."/>
        </authorList>
    </citation>
    <scope>NUCLEOTIDE SEQUENCE [LARGE SCALE GENOMIC DNA]</scope>
    <source>
        <strain>DSM 15139 / CIP 105565 / TT01</strain>
    </source>
</reference>
<keyword id="KW-0997">Cell inner membrane</keyword>
<keyword id="KW-1003">Cell membrane</keyword>
<keyword id="KW-0444">Lipid biosynthesis</keyword>
<keyword id="KW-0443">Lipid metabolism</keyword>
<keyword id="KW-0472">Membrane</keyword>
<keyword id="KW-0594">Phospholipid biosynthesis</keyword>
<keyword id="KW-1208">Phospholipid metabolism</keyword>
<keyword id="KW-1185">Reference proteome</keyword>
<keyword id="KW-0808">Transferase</keyword>
<keyword id="KW-0812">Transmembrane</keyword>
<keyword id="KW-1133">Transmembrane helix</keyword>
<sequence>MSAIALGMIIFAYLCGSISSAILICRLAGLPDPRQHGSGNPGATNVLRIGGRSTAAIVLICDVLKGMIPVWLAYQLYVPPFYLGITAIAACLGHIYPIFFQFKGGKGVATAFGAIAAIGWDLTGLMMGTWLLTILLSGYSSLGAIVSALIAPFYVWWFKPEFTFPVAMLCCLVLLRHHDNIQRLWRGQENRLWNKLKKKKEMTEKEKKRTEKEQRKED</sequence>
<protein>
    <recommendedName>
        <fullName evidence="1">Glycerol-3-phosphate acyltransferase</fullName>
    </recommendedName>
    <alternativeName>
        <fullName evidence="1">Acyl-PO4 G3P acyltransferase</fullName>
    </alternativeName>
    <alternativeName>
        <fullName evidence="1">Acyl-phosphate--glycerol-3-phosphate acyltransferase</fullName>
    </alternativeName>
    <alternativeName>
        <fullName evidence="1">G3P acyltransferase</fullName>
        <shortName evidence="1">GPAT</shortName>
        <ecNumber evidence="1">2.3.1.275</ecNumber>
    </alternativeName>
    <alternativeName>
        <fullName evidence="1">Lysophosphatidic acid synthase</fullName>
        <shortName evidence="1">LPA synthase</shortName>
    </alternativeName>
</protein>
<evidence type="ECO:0000255" key="1">
    <source>
        <dbReference type="HAMAP-Rule" id="MF_01043"/>
    </source>
</evidence>
<organism>
    <name type="scientific">Photorhabdus laumondii subsp. laumondii (strain DSM 15139 / CIP 105565 / TT01)</name>
    <name type="common">Photorhabdus luminescens subsp. laumondii</name>
    <dbReference type="NCBI Taxonomy" id="243265"/>
    <lineage>
        <taxon>Bacteria</taxon>
        <taxon>Pseudomonadati</taxon>
        <taxon>Pseudomonadota</taxon>
        <taxon>Gammaproteobacteria</taxon>
        <taxon>Enterobacterales</taxon>
        <taxon>Morganellaceae</taxon>
        <taxon>Photorhabdus</taxon>
    </lineage>
</organism>
<name>PLSY_PHOLL</name>